<proteinExistence type="inferred from homology"/>
<dbReference type="EMBL" id="AB005246">
    <property type="status" value="NOT_ANNOTATED_CDS"/>
    <property type="molecule type" value="Genomic_DNA"/>
</dbReference>
<dbReference type="EMBL" id="AB011483">
    <property type="status" value="NOT_ANNOTATED_CDS"/>
    <property type="molecule type" value="Genomic_DNA"/>
</dbReference>
<dbReference type="EMBL" id="CP002688">
    <property type="protein sequence ID" value="AED97357.1"/>
    <property type="molecule type" value="Genomic_DNA"/>
</dbReference>
<dbReference type="RefSeq" id="NP_001032113.1">
    <property type="nucleotide sequence ID" value="NM_001037036.2"/>
</dbReference>
<dbReference type="SMR" id="Q2V2W7"/>
<dbReference type="PaxDb" id="3702-AT5G60615.1"/>
<dbReference type="ProteomicsDB" id="224197"/>
<dbReference type="EnsemblPlants" id="AT5G60615.1">
    <property type="protein sequence ID" value="AT5G60615.1"/>
    <property type="gene ID" value="AT5G60615"/>
</dbReference>
<dbReference type="GeneID" id="3771542"/>
<dbReference type="Gramene" id="AT5G60615.1">
    <property type="protein sequence ID" value="AT5G60615.1"/>
    <property type="gene ID" value="AT5G60615"/>
</dbReference>
<dbReference type="KEGG" id="ath:AT5G60615"/>
<dbReference type="Araport" id="AT5G60615"/>
<dbReference type="TAIR" id="AT5G60615"/>
<dbReference type="HOGENOM" id="CLU_2641579_0_0_1"/>
<dbReference type="InParanoid" id="Q2V2W7"/>
<dbReference type="OMA" id="GHCLFDK"/>
<dbReference type="OrthoDB" id="1022153at2759"/>
<dbReference type="PhylomeDB" id="Q2V2W7"/>
<dbReference type="PRO" id="PR:Q2V2W7"/>
<dbReference type="Proteomes" id="UP000006548">
    <property type="component" value="Chromosome 5"/>
</dbReference>
<dbReference type="ExpressionAtlas" id="Q2V2W7">
    <property type="expression patterns" value="baseline and differential"/>
</dbReference>
<dbReference type="GO" id="GO:0005576">
    <property type="term" value="C:extracellular region"/>
    <property type="evidence" value="ECO:0007669"/>
    <property type="project" value="UniProtKB-SubCell"/>
</dbReference>
<dbReference type="GO" id="GO:0050832">
    <property type="term" value="P:defense response to fungus"/>
    <property type="evidence" value="ECO:0007669"/>
    <property type="project" value="UniProtKB-KW"/>
</dbReference>
<dbReference type="GO" id="GO:0031640">
    <property type="term" value="P:killing of cells of another organism"/>
    <property type="evidence" value="ECO:0007669"/>
    <property type="project" value="UniProtKB-KW"/>
</dbReference>
<dbReference type="InterPro" id="IPR010851">
    <property type="entry name" value="DEFL"/>
</dbReference>
<dbReference type="PANTHER" id="PTHR48224:SF1">
    <property type="entry name" value="DEFENSIN-LIKE PROTEIN 270"/>
    <property type="match status" value="1"/>
</dbReference>
<dbReference type="PANTHER" id="PTHR48224">
    <property type="entry name" value="DEFENSIN-LIKE PROTEIN 270-RELATED"/>
    <property type="match status" value="1"/>
</dbReference>
<dbReference type="Pfam" id="PF25052">
    <property type="entry name" value="AtDEF-like"/>
    <property type="match status" value="1"/>
</dbReference>
<protein>
    <recommendedName>
        <fullName>Putative defensin-like protein 274</fullName>
    </recommendedName>
</protein>
<accession>Q2V2W7</accession>
<keyword id="KW-0929">Antimicrobial</keyword>
<keyword id="KW-1015">Disulfide bond</keyword>
<keyword id="KW-0295">Fungicide</keyword>
<keyword id="KW-0611">Plant defense</keyword>
<keyword id="KW-1185">Reference proteome</keyword>
<keyword id="KW-0964">Secreted</keyword>
<keyword id="KW-0732">Signal</keyword>
<feature type="signal peptide" evidence="2">
    <location>
        <begin position="1"/>
        <end position="23"/>
    </location>
</feature>
<feature type="chain" id="PRO_0000379735" description="Putative defensin-like protein 274">
    <location>
        <begin position="24"/>
        <end position="79"/>
    </location>
</feature>
<feature type="disulfide bond" evidence="1">
    <location>
        <begin position="35"/>
        <end position="76"/>
    </location>
</feature>
<feature type="disulfide bond" evidence="1">
    <location>
        <begin position="41"/>
        <end position="64"/>
    </location>
</feature>
<feature type="disulfide bond" evidence="1">
    <location>
        <begin position="47"/>
        <end position="74"/>
    </location>
</feature>
<feature type="disulfide bond" evidence="1">
    <location>
        <begin position="51"/>
        <end position="75"/>
    </location>
</feature>
<organism>
    <name type="scientific">Arabidopsis thaliana</name>
    <name type="common">Mouse-ear cress</name>
    <dbReference type="NCBI Taxonomy" id="3702"/>
    <lineage>
        <taxon>Eukaryota</taxon>
        <taxon>Viridiplantae</taxon>
        <taxon>Streptophyta</taxon>
        <taxon>Embryophyta</taxon>
        <taxon>Tracheophyta</taxon>
        <taxon>Spermatophyta</taxon>
        <taxon>Magnoliopsida</taxon>
        <taxon>eudicotyledons</taxon>
        <taxon>Gunneridae</taxon>
        <taxon>Pentapetalae</taxon>
        <taxon>rosids</taxon>
        <taxon>malvids</taxon>
        <taxon>Brassicales</taxon>
        <taxon>Brassicaceae</taxon>
        <taxon>Camelineae</taxon>
        <taxon>Arabidopsis</taxon>
    </lineage>
</organism>
<reference key="1">
    <citation type="journal article" date="1997" name="DNA Res.">
        <title>Structural analysis of Arabidopsis thaliana chromosome 5. I. Sequence features of the 1.6 Mb regions covered by twenty physically assigned P1 clones.</title>
        <authorList>
            <person name="Sato S."/>
            <person name="Kotani H."/>
            <person name="Nakamura Y."/>
            <person name="Kaneko T."/>
            <person name="Asamizu E."/>
            <person name="Fukami M."/>
            <person name="Miyajima N."/>
            <person name="Tabata S."/>
        </authorList>
    </citation>
    <scope>NUCLEOTIDE SEQUENCE [LARGE SCALE GENOMIC DNA]</scope>
    <source>
        <strain>cv. Columbia</strain>
    </source>
</reference>
<reference key="2">
    <citation type="journal article" date="1998" name="DNA Res.">
        <title>Structural analysis of Arabidopsis thaliana chromosome 5. V. Sequence features of the regions of 1,381,565 bp covered by twenty one physically assigned P1 and TAC clones.</title>
        <authorList>
            <person name="Kaneko T."/>
            <person name="Kotani H."/>
            <person name="Nakamura Y."/>
            <person name="Sato S."/>
            <person name="Asamizu E."/>
            <person name="Miyajima N."/>
            <person name="Tabata S."/>
        </authorList>
    </citation>
    <scope>NUCLEOTIDE SEQUENCE [LARGE SCALE GENOMIC DNA]</scope>
    <source>
        <strain>cv. Columbia</strain>
    </source>
</reference>
<reference key="3">
    <citation type="journal article" date="2017" name="Plant J.">
        <title>Araport11: a complete reannotation of the Arabidopsis thaliana reference genome.</title>
        <authorList>
            <person name="Cheng C.Y."/>
            <person name="Krishnakumar V."/>
            <person name="Chan A.P."/>
            <person name="Thibaud-Nissen F."/>
            <person name="Schobel S."/>
            <person name="Town C.D."/>
        </authorList>
    </citation>
    <scope>GENOME REANNOTATION</scope>
    <source>
        <strain>cv. Columbia</strain>
    </source>
</reference>
<reference key="4">
    <citation type="journal article" date="2005" name="Plant Physiol.">
        <title>Genome organization of more than 300 defensin-like genes in Arabidopsis.</title>
        <authorList>
            <person name="Silverstein K.A.T."/>
            <person name="Graham M.A."/>
            <person name="Paape T.D."/>
            <person name="VandenBosch K.A."/>
        </authorList>
    </citation>
    <scope>GENE FAMILY</scope>
</reference>
<comment type="subcellular location">
    <subcellularLocation>
        <location evidence="1">Secreted</location>
    </subcellularLocation>
</comment>
<comment type="similarity">
    <text evidence="3">Belongs to the DEFL family.</text>
</comment>
<evidence type="ECO:0000250" key="1"/>
<evidence type="ECO:0000255" key="2"/>
<evidence type="ECO:0000305" key="3"/>
<name>DF274_ARATH</name>
<sequence>MASSRFQLVALLVVFSLVISITANSVEKDVMDGPCRLRGTCNNDGDCDKHCHRSTDAAAMDGHCLFDKPTGPVCCCLFD</sequence>
<gene>
    <name type="ordered locus">At5g60615</name>
    <name type="ORF">MUF9</name>
    <name type="ORF">MUP24</name>
</gene>